<keyword id="KW-0133">Cell shape</keyword>
<keyword id="KW-0961">Cell wall biogenesis/degradation</keyword>
<keyword id="KW-0413">Isomerase</keyword>
<keyword id="KW-0573">Peptidoglycan synthesis</keyword>
<keyword id="KW-1185">Reference proteome</keyword>
<evidence type="ECO:0000255" key="1">
    <source>
        <dbReference type="HAMAP-Rule" id="MF_00258"/>
    </source>
</evidence>
<gene>
    <name evidence="1" type="primary">murI</name>
    <name type="ordered locus">BLA_0840</name>
</gene>
<reference key="1">
    <citation type="journal article" date="2009" name="J. Bacteriol.">
        <title>Genome sequence of the probiotic bacterium Bifidobacterium animalis subsp. lactis AD011.</title>
        <authorList>
            <person name="Kim J.F."/>
            <person name="Jeong H."/>
            <person name="Yu D.S."/>
            <person name="Choi S.-H."/>
            <person name="Hur C.-G."/>
            <person name="Park M.-S."/>
            <person name="Yoon S.H."/>
            <person name="Kim D.-W."/>
            <person name="Ji G.E."/>
            <person name="Park H.-S."/>
            <person name="Oh T.K."/>
        </authorList>
    </citation>
    <scope>NUCLEOTIDE SEQUENCE [LARGE SCALE GENOMIC DNA]</scope>
    <source>
        <strain>AD011</strain>
    </source>
</reference>
<comment type="function">
    <text evidence="1">Provides the (R)-glutamate required for cell wall biosynthesis.</text>
</comment>
<comment type="catalytic activity">
    <reaction evidence="1">
        <text>L-glutamate = D-glutamate</text>
        <dbReference type="Rhea" id="RHEA:12813"/>
        <dbReference type="ChEBI" id="CHEBI:29985"/>
        <dbReference type="ChEBI" id="CHEBI:29986"/>
        <dbReference type="EC" id="5.1.1.3"/>
    </reaction>
</comment>
<comment type="pathway">
    <text evidence="1">Cell wall biogenesis; peptidoglycan biosynthesis.</text>
</comment>
<comment type="similarity">
    <text evidence="1">Belongs to the aspartate/glutamate racemases family.</text>
</comment>
<sequence>MTSSAPVGVFDSGLGGISVVRQIRTDLPHERILYFGDSANAPYGTKTPEQVRDLSFRIVEDFVEQGAKAVVIACNTATSSAVQELREHYDIPIIGMEPALKVACDRGHGERQSVIVAATPLTLRERKFAALMHRFEDAHTIHKQPCPRLVEIVERGELDDHDLVMRTLHDYFDQYDLAHTDSVVLGCTHFVFYRDYFRELLPNNVAIVDGNEGTARHLEVVLESLGKLAPEEQDGGVILRNSDPGERIAELAQQLLER</sequence>
<organism>
    <name type="scientific">Bifidobacterium animalis subsp. lactis (strain AD011)</name>
    <dbReference type="NCBI Taxonomy" id="442563"/>
    <lineage>
        <taxon>Bacteria</taxon>
        <taxon>Bacillati</taxon>
        <taxon>Actinomycetota</taxon>
        <taxon>Actinomycetes</taxon>
        <taxon>Bifidobacteriales</taxon>
        <taxon>Bifidobacteriaceae</taxon>
        <taxon>Bifidobacterium</taxon>
    </lineage>
</organism>
<protein>
    <recommendedName>
        <fullName evidence="1">Glutamate racemase</fullName>
        <ecNumber evidence="1">5.1.1.3</ecNumber>
    </recommendedName>
</protein>
<dbReference type="EC" id="5.1.1.3" evidence="1"/>
<dbReference type="EMBL" id="CP001213">
    <property type="protein sequence ID" value="ACL29132.1"/>
    <property type="molecule type" value="Genomic_DNA"/>
</dbReference>
<dbReference type="RefSeq" id="WP_004218555.1">
    <property type="nucleotide sequence ID" value="NC_011835.1"/>
</dbReference>
<dbReference type="SMR" id="B8DT03"/>
<dbReference type="STRING" id="442563.BLA_0840"/>
<dbReference type="GeneID" id="29695941"/>
<dbReference type="KEGG" id="bla:BLA_0840"/>
<dbReference type="HOGENOM" id="CLU_052344_1_0_11"/>
<dbReference type="UniPathway" id="UPA00219"/>
<dbReference type="Proteomes" id="UP000002456">
    <property type="component" value="Chromosome"/>
</dbReference>
<dbReference type="GO" id="GO:0008881">
    <property type="term" value="F:glutamate racemase activity"/>
    <property type="evidence" value="ECO:0007669"/>
    <property type="project" value="UniProtKB-UniRule"/>
</dbReference>
<dbReference type="GO" id="GO:0071555">
    <property type="term" value="P:cell wall organization"/>
    <property type="evidence" value="ECO:0007669"/>
    <property type="project" value="UniProtKB-KW"/>
</dbReference>
<dbReference type="GO" id="GO:0009252">
    <property type="term" value="P:peptidoglycan biosynthetic process"/>
    <property type="evidence" value="ECO:0007669"/>
    <property type="project" value="UniProtKB-UniRule"/>
</dbReference>
<dbReference type="GO" id="GO:0008360">
    <property type="term" value="P:regulation of cell shape"/>
    <property type="evidence" value="ECO:0007669"/>
    <property type="project" value="UniProtKB-KW"/>
</dbReference>
<dbReference type="Gene3D" id="3.40.50.1860">
    <property type="match status" value="2"/>
</dbReference>
<dbReference type="HAMAP" id="MF_00258">
    <property type="entry name" value="Glu_racemase"/>
    <property type="match status" value="1"/>
</dbReference>
<dbReference type="InterPro" id="IPR015942">
    <property type="entry name" value="Asp/Glu/hydantoin_racemase"/>
</dbReference>
<dbReference type="InterPro" id="IPR001920">
    <property type="entry name" value="Asp/Glu_race"/>
</dbReference>
<dbReference type="InterPro" id="IPR018187">
    <property type="entry name" value="Asp/Glu_racemase_AS_1"/>
</dbReference>
<dbReference type="InterPro" id="IPR004391">
    <property type="entry name" value="Glu_race"/>
</dbReference>
<dbReference type="NCBIfam" id="TIGR00067">
    <property type="entry name" value="glut_race"/>
    <property type="match status" value="1"/>
</dbReference>
<dbReference type="PANTHER" id="PTHR21198">
    <property type="entry name" value="GLUTAMATE RACEMASE"/>
    <property type="match status" value="1"/>
</dbReference>
<dbReference type="PANTHER" id="PTHR21198:SF3">
    <property type="entry name" value="GLUTAMATE RACEMASE"/>
    <property type="match status" value="1"/>
</dbReference>
<dbReference type="Pfam" id="PF01177">
    <property type="entry name" value="Asp_Glu_race"/>
    <property type="match status" value="1"/>
</dbReference>
<dbReference type="SUPFAM" id="SSF53681">
    <property type="entry name" value="Aspartate/glutamate racemase"/>
    <property type="match status" value="2"/>
</dbReference>
<dbReference type="PROSITE" id="PS00923">
    <property type="entry name" value="ASP_GLU_RACEMASE_1"/>
    <property type="match status" value="1"/>
</dbReference>
<name>MURI_BIFA0</name>
<accession>B8DT03</accession>
<proteinExistence type="inferred from homology"/>
<feature type="chain" id="PRO_1000125601" description="Glutamate racemase">
    <location>
        <begin position="1"/>
        <end position="258"/>
    </location>
</feature>
<feature type="active site" description="Proton donor/acceptor" evidence="1">
    <location>
        <position position="74"/>
    </location>
</feature>
<feature type="active site" description="Proton donor/acceptor" evidence="1">
    <location>
        <position position="187"/>
    </location>
</feature>
<feature type="binding site" evidence="1">
    <location>
        <begin position="11"/>
        <end position="12"/>
    </location>
    <ligand>
        <name>substrate</name>
    </ligand>
</feature>
<feature type="binding site" evidence="1">
    <location>
        <begin position="43"/>
        <end position="44"/>
    </location>
    <ligand>
        <name>substrate</name>
    </ligand>
</feature>
<feature type="binding site" evidence="1">
    <location>
        <begin position="75"/>
        <end position="76"/>
    </location>
    <ligand>
        <name>substrate</name>
    </ligand>
</feature>
<feature type="binding site" evidence="1">
    <location>
        <begin position="188"/>
        <end position="189"/>
    </location>
    <ligand>
        <name>substrate</name>
    </ligand>
</feature>